<comment type="function">
    <text evidence="1">Part of the Sec protein translocase complex. Interacts with the SecYEG preprotein conducting channel. Has a central role in coupling the hydrolysis of ATP to the transfer of proteins into and across the cell membrane, serving as an ATP-driven molecular motor driving the stepwise translocation of polypeptide chains across the membrane.</text>
</comment>
<comment type="catalytic activity">
    <reaction evidence="1">
        <text>ATP + H2O + cellular proteinSide 1 = ADP + phosphate + cellular proteinSide 2.</text>
        <dbReference type="EC" id="7.4.2.8"/>
    </reaction>
</comment>
<comment type="subunit">
    <text evidence="1">Monomer and homodimer. Part of the essential Sec protein translocation apparatus which comprises SecA, SecYEG and auxiliary proteins SecDF. Other proteins may also be involved.</text>
</comment>
<comment type="subcellular location">
    <subcellularLocation>
        <location evidence="1">Cell membrane</location>
        <topology evidence="1">Peripheral membrane protein</topology>
        <orientation evidence="1">Cytoplasmic side</orientation>
    </subcellularLocation>
    <subcellularLocation>
        <location evidence="1">Cytoplasm</location>
    </subcellularLocation>
    <text evidence="1">Distribution is 50-50.</text>
</comment>
<comment type="similarity">
    <text evidence="1">Belongs to the SecA family.</text>
</comment>
<name>SECA_MICLC</name>
<protein>
    <recommendedName>
        <fullName evidence="1">Protein translocase subunit SecA</fullName>
        <ecNumber evidence="1">7.4.2.8</ecNumber>
    </recommendedName>
</protein>
<gene>
    <name evidence="1" type="primary">secA</name>
    <name type="ordered locus">Mlut_14700</name>
</gene>
<organism>
    <name type="scientific">Micrococcus luteus (strain ATCC 4698 / DSM 20030 / JCM 1464 / CCM 169 / CCUG 5858 / IAM 1056 / NBRC 3333 / NCIMB 9278 / NCTC 2665 / VKM Ac-2230)</name>
    <name type="common">Micrococcus lysodeikticus</name>
    <dbReference type="NCBI Taxonomy" id="465515"/>
    <lineage>
        <taxon>Bacteria</taxon>
        <taxon>Bacillati</taxon>
        <taxon>Actinomycetota</taxon>
        <taxon>Actinomycetes</taxon>
        <taxon>Micrococcales</taxon>
        <taxon>Micrococcaceae</taxon>
        <taxon>Micrococcus</taxon>
    </lineage>
</organism>
<dbReference type="EC" id="7.4.2.8" evidence="1"/>
<dbReference type="EMBL" id="CP001628">
    <property type="protein sequence ID" value="ACS30965.1"/>
    <property type="molecule type" value="Genomic_DNA"/>
</dbReference>
<dbReference type="RefSeq" id="WP_012750975.1">
    <property type="nucleotide sequence ID" value="NC_012803.1"/>
</dbReference>
<dbReference type="SMR" id="C5CAR1"/>
<dbReference type="STRING" id="465515.Mlut_14700"/>
<dbReference type="EnsemblBacteria" id="ACS30965">
    <property type="protein sequence ID" value="ACS30965"/>
    <property type="gene ID" value="Mlut_14700"/>
</dbReference>
<dbReference type="GeneID" id="93343346"/>
<dbReference type="KEGG" id="mlu:Mlut_14700"/>
<dbReference type="PATRIC" id="fig|465515.4.peg.1406"/>
<dbReference type="eggNOG" id="COG0653">
    <property type="taxonomic scope" value="Bacteria"/>
</dbReference>
<dbReference type="HOGENOM" id="CLU_005314_3_0_11"/>
<dbReference type="Proteomes" id="UP000000738">
    <property type="component" value="Chromosome"/>
</dbReference>
<dbReference type="GO" id="GO:0031522">
    <property type="term" value="C:cell envelope Sec protein transport complex"/>
    <property type="evidence" value="ECO:0007669"/>
    <property type="project" value="TreeGrafter"/>
</dbReference>
<dbReference type="GO" id="GO:0005829">
    <property type="term" value="C:cytosol"/>
    <property type="evidence" value="ECO:0007669"/>
    <property type="project" value="TreeGrafter"/>
</dbReference>
<dbReference type="GO" id="GO:0005886">
    <property type="term" value="C:plasma membrane"/>
    <property type="evidence" value="ECO:0007669"/>
    <property type="project" value="UniProtKB-SubCell"/>
</dbReference>
<dbReference type="GO" id="GO:0005524">
    <property type="term" value="F:ATP binding"/>
    <property type="evidence" value="ECO:0007669"/>
    <property type="project" value="UniProtKB-UniRule"/>
</dbReference>
<dbReference type="GO" id="GO:0008564">
    <property type="term" value="F:protein-exporting ATPase activity"/>
    <property type="evidence" value="ECO:0007669"/>
    <property type="project" value="UniProtKB-EC"/>
</dbReference>
<dbReference type="GO" id="GO:0065002">
    <property type="term" value="P:intracellular protein transmembrane transport"/>
    <property type="evidence" value="ECO:0007669"/>
    <property type="project" value="UniProtKB-UniRule"/>
</dbReference>
<dbReference type="GO" id="GO:0017038">
    <property type="term" value="P:protein import"/>
    <property type="evidence" value="ECO:0007669"/>
    <property type="project" value="InterPro"/>
</dbReference>
<dbReference type="GO" id="GO:0006605">
    <property type="term" value="P:protein targeting"/>
    <property type="evidence" value="ECO:0007669"/>
    <property type="project" value="UniProtKB-UniRule"/>
</dbReference>
<dbReference type="GO" id="GO:0043952">
    <property type="term" value="P:protein transport by the Sec complex"/>
    <property type="evidence" value="ECO:0007669"/>
    <property type="project" value="TreeGrafter"/>
</dbReference>
<dbReference type="CDD" id="cd17928">
    <property type="entry name" value="DEXDc_SecA"/>
    <property type="match status" value="1"/>
</dbReference>
<dbReference type="CDD" id="cd18803">
    <property type="entry name" value="SF2_C_secA"/>
    <property type="match status" value="1"/>
</dbReference>
<dbReference type="FunFam" id="1.10.3060.10:FF:000002">
    <property type="entry name" value="Preprotein translocase subunit SecA"/>
    <property type="match status" value="1"/>
</dbReference>
<dbReference type="FunFam" id="3.40.50.300:FF:000113">
    <property type="entry name" value="Preprotein translocase subunit SecA"/>
    <property type="match status" value="1"/>
</dbReference>
<dbReference type="FunFam" id="3.40.50.300:FF:000334">
    <property type="entry name" value="Protein translocase subunit SecA"/>
    <property type="match status" value="1"/>
</dbReference>
<dbReference type="FunFam" id="3.90.1440.10:FF:000002">
    <property type="entry name" value="Protein translocase subunit SecA"/>
    <property type="match status" value="1"/>
</dbReference>
<dbReference type="Gene3D" id="1.10.3060.10">
    <property type="entry name" value="Helical scaffold and wing domains of SecA"/>
    <property type="match status" value="1"/>
</dbReference>
<dbReference type="Gene3D" id="3.40.50.300">
    <property type="entry name" value="P-loop containing nucleotide triphosphate hydrolases"/>
    <property type="match status" value="2"/>
</dbReference>
<dbReference type="Gene3D" id="3.90.1440.10">
    <property type="entry name" value="SecA, preprotein cross-linking domain"/>
    <property type="match status" value="1"/>
</dbReference>
<dbReference type="HAMAP" id="MF_01382">
    <property type="entry name" value="SecA"/>
    <property type="match status" value="1"/>
</dbReference>
<dbReference type="InterPro" id="IPR014001">
    <property type="entry name" value="Helicase_ATP-bd"/>
</dbReference>
<dbReference type="InterPro" id="IPR027417">
    <property type="entry name" value="P-loop_NTPase"/>
</dbReference>
<dbReference type="InterPro" id="IPR000185">
    <property type="entry name" value="SecA"/>
</dbReference>
<dbReference type="InterPro" id="IPR020937">
    <property type="entry name" value="SecA_CS"/>
</dbReference>
<dbReference type="InterPro" id="IPR011115">
    <property type="entry name" value="SecA_DEAD"/>
</dbReference>
<dbReference type="InterPro" id="IPR014018">
    <property type="entry name" value="SecA_motor_DEAD"/>
</dbReference>
<dbReference type="InterPro" id="IPR011130">
    <property type="entry name" value="SecA_preprotein_X-link_dom"/>
</dbReference>
<dbReference type="InterPro" id="IPR044722">
    <property type="entry name" value="SecA_SF2_C"/>
</dbReference>
<dbReference type="InterPro" id="IPR011116">
    <property type="entry name" value="SecA_Wing/Scaffold"/>
</dbReference>
<dbReference type="InterPro" id="IPR036266">
    <property type="entry name" value="SecA_Wing/Scaffold_sf"/>
</dbReference>
<dbReference type="InterPro" id="IPR036670">
    <property type="entry name" value="SecA_X-link_sf"/>
</dbReference>
<dbReference type="NCBIfam" id="NF009538">
    <property type="entry name" value="PRK12904.1"/>
    <property type="match status" value="1"/>
</dbReference>
<dbReference type="NCBIfam" id="TIGR00963">
    <property type="entry name" value="secA"/>
    <property type="match status" value="1"/>
</dbReference>
<dbReference type="PANTHER" id="PTHR30612:SF0">
    <property type="entry name" value="CHLOROPLAST PROTEIN-TRANSPORTING ATPASE"/>
    <property type="match status" value="1"/>
</dbReference>
<dbReference type="PANTHER" id="PTHR30612">
    <property type="entry name" value="SECA INNER MEMBRANE COMPONENT OF SEC PROTEIN SECRETION SYSTEM"/>
    <property type="match status" value="1"/>
</dbReference>
<dbReference type="Pfam" id="PF21090">
    <property type="entry name" value="P-loop_SecA"/>
    <property type="match status" value="1"/>
</dbReference>
<dbReference type="Pfam" id="PF07517">
    <property type="entry name" value="SecA_DEAD"/>
    <property type="match status" value="1"/>
</dbReference>
<dbReference type="Pfam" id="PF01043">
    <property type="entry name" value="SecA_PP_bind"/>
    <property type="match status" value="1"/>
</dbReference>
<dbReference type="Pfam" id="PF07516">
    <property type="entry name" value="SecA_SW"/>
    <property type="match status" value="1"/>
</dbReference>
<dbReference type="PRINTS" id="PR00906">
    <property type="entry name" value="SECA"/>
</dbReference>
<dbReference type="SMART" id="SM00957">
    <property type="entry name" value="SecA_DEAD"/>
    <property type="match status" value="1"/>
</dbReference>
<dbReference type="SMART" id="SM00958">
    <property type="entry name" value="SecA_PP_bind"/>
    <property type="match status" value="1"/>
</dbReference>
<dbReference type="SUPFAM" id="SSF81886">
    <property type="entry name" value="Helical scaffold and wing domains of SecA"/>
    <property type="match status" value="1"/>
</dbReference>
<dbReference type="SUPFAM" id="SSF52540">
    <property type="entry name" value="P-loop containing nucleoside triphosphate hydrolases"/>
    <property type="match status" value="2"/>
</dbReference>
<dbReference type="SUPFAM" id="SSF81767">
    <property type="entry name" value="Pre-protein crosslinking domain of SecA"/>
    <property type="match status" value="1"/>
</dbReference>
<dbReference type="PROSITE" id="PS01312">
    <property type="entry name" value="SECA"/>
    <property type="match status" value="1"/>
</dbReference>
<dbReference type="PROSITE" id="PS51196">
    <property type="entry name" value="SECA_MOTOR_DEAD"/>
    <property type="match status" value="1"/>
</dbReference>
<keyword id="KW-0067">ATP-binding</keyword>
<keyword id="KW-1003">Cell membrane</keyword>
<keyword id="KW-0963">Cytoplasm</keyword>
<keyword id="KW-0472">Membrane</keyword>
<keyword id="KW-0547">Nucleotide-binding</keyword>
<keyword id="KW-0653">Protein transport</keyword>
<keyword id="KW-1185">Reference proteome</keyword>
<keyword id="KW-1278">Translocase</keyword>
<keyword id="KW-0811">Translocation</keyword>
<keyword id="KW-0813">Transport</keyword>
<proteinExistence type="inferred from homology"/>
<sequence>MPSIIDRVLKISDNRVLKRMQATVDAVNLLEDDFRALSDAELRAETDTLRARHADGESLDLLLPEAFAAVREAAGRTLGQRHYDVQLLGGIALHQGNIAEMKTGEGKTLVATAPAYLNALSGRGVHVVTVNDFLASYQADLMGRVFRFLGMQTGVIVAGQTPAVRREQYAADITYGTNNEFGFDFLRDNMAWSLDELVQREHHYAIVDEVDSILIDEARTPLIISGPAQGEANRWYGEFARLVRRLEADTDYEVDHKKRTVGILGPGIEKVEDHLGITNLYETQNTTLIQFLNNAVKAKELFKRDKDYVVLDGEVQIVDEHTGRVLKGRRYNEGLHQAIEAKEGVEVKPENQTLATVTLQNYFRGYEKLAGMTGTAETEAAEFTSTYGLGVVVIPPNRERQRVDRNDVVYKNEKVKFDAVVDDIAERHAKGQPVLVGTTSVEKSEYLSTLLAKRGIRHEVLNAKNHAREAAIVAQAGRPGAVTVATNMAGRGTDIMLGGNAEFTAVARMQELGLDAAEDPEAYEARWPEVLAQAEAAVEDAHREVIEAGGLYVVGTERHDSRRIDNQLRGRSGRQGDPGESRFYLSLTDELMRNFNPGVAQRIMNSPSIPDDMALEFGFVSKAIQNAQAQVEGRNAEQRKNVLKYDDVMNRQREAIYTDRRSILEGEDLQDRVRRFVEDAVGNIVDAATEEGQATDWDLDQLWRDLAELYPVGISQEDVLDEVGGRGRLKAEVLKRELVSDALLAYEDREAQVGSEALREAERRVVLASIGRHWQEHLYEMDYLKEGIGLRAMAQREPLVEYQREGYTMFQNMLAGIREDAVRTLFQAQISAAPAPTSLPGVKDARAVTMAPQISVEGIDAPQRPAQLRFTGPSEDGQSAVTRSGTDSGATVAAGTNRRSRRQAERRGRRG</sequence>
<reference key="1">
    <citation type="journal article" date="2010" name="J. Bacteriol.">
        <title>Genome sequence of the Fleming strain of Micrococcus luteus, a simple free-living actinobacterium.</title>
        <authorList>
            <person name="Young M."/>
            <person name="Artsatbanov V."/>
            <person name="Beller H.R."/>
            <person name="Chandra G."/>
            <person name="Chater K.F."/>
            <person name="Dover L.G."/>
            <person name="Goh E.B."/>
            <person name="Kahan T."/>
            <person name="Kaprelyants A.S."/>
            <person name="Kyrpides N."/>
            <person name="Lapidus A."/>
            <person name="Lowry S.R."/>
            <person name="Lykidis A."/>
            <person name="Mahillon J."/>
            <person name="Markowitz V."/>
            <person name="Mavromatis K."/>
            <person name="Mukamolova G.V."/>
            <person name="Oren A."/>
            <person name="Rokem J.S."/>
            <person name="Smith M.C."/>
            <person name="Young D.I."/>
            <person name="Greenblatt C.L."/>
        </authorList>
    </citation>
    <scope>NUCLEOTIDE SEQUENCE [LARGE SCALE GENOMIC DNA]</scope>
    <source>
        <strain>ATCC 4698 / DSM 20030 / JCM 1464 / CCM 169 / CCUG 5858 / IAM 1056 / NBRC 3333 / NCIMB 9278 / NCTC 2665 / VKM Ac-2230</strain>
    </source>
</reference>
<feature type="chain" id="PRO_1000215114" description="Protein translocase subunit SecA">
    <location>
        <begin position="1"/>
        <end position="911"/>
    </location>
</feature>
<feature type="region of interest" description="Disordered" evidence="2">
    <location>
        <begin position="856"/>
        <end position="911"/>
    </location>
</feature>
<feature type="compositionally biased region" description="Polar residues" evidence="2">
    <location>
        <begin position="876"/>
        <end position="889"/>
    </location>
</feature>
<feature type="compositionally biased region" description="Basic and acidic residues" evidence="2">
    <location>
        <begin position="902"/>
        <end position="911"/>
    </location>
</feature>
<feature type="binding site" evidence="1">
    <location>
        <position position="86"/>
    </location>
    <ligand>
        <name>ATP</name>
        <dbReference type="ChEBI" id="CHEBI:30616"/>
    </ligand>
</feature>
<feature type="binding site" evidence="1">
    <location>
        <begin position="104"/>
        <end position="108"/>
    </location>
    <ligand>
        <name>ATP</name>
        <dbReference type="ChEBI" id="CHEBI:30616"/>
    </ligand>
</feature>
<feature type="binding site" evidence="1">
    <location>
        <position position="494"/>
    </location>
    <ligand>
        <name>ATP</name>
        <dbReference type="ChEBI" id="CHEBI:30616"/>
    </ligand>
</feature>
<accession>C5CAR1</accession>
<evidence type="ECO:0000255" key="1">
    <source>
        <dbReference type="HAMAP-Rule" id="MF_01382"/>
    </source>
</evidence>
<evidence type="ECO:0000256" key="2">
    <source>
        <dbReference type="SAM" id="MobiDB-lite"/>
    </source>
</evidence>